<gene>
    <name evidence="1" type="primary">greA</name>
    <name type="ordered locus">OTT_1295</name>
</gene>
<name>GREA_ORITI</name>
<feature type="chain" id="PRO_1000094182" description="Transcription elongation factor GreA">
    <location>
        <begin position="1"/>
        <end position="159"/>
    </location>
</feature>
<comment type="function">
    <text evidence="1">Necessary for efficient RNA polymerase transcription elongation past template-encoded arresting sites. The arresting sites in DNA have the property of trapping a certain fraction of elongating RNA polymerases that pass through, resulting in locked ternary complexes. Cleavage of the nascent transcript by cleavage factors such as GreA or GreB allows the resumption of elongation from the new 3'terminus. GreA releases sequences of 2 to 3 nucleotides.</text>
</comment>
<comment type="similarity">
    <text evidence="1">Belongs to the GreA/GreB family.</text>
</comment>
<evidence type="ECO:0000255" key="1">
    <source>
        <dbReference type="HAMAP-Rule" id="MF_00105"/>
    </source>
</evidence>
<dbReference type="EMBL" id="AP008981">
    <property type="protein sequence ID" value="BAG40753.1"/>
    <property type="molecule type" value="Genomic_DNA"/>
</dbReference>
<dbReference type="RefSeq" id="WP_012461804.1">
    <property type="nucleotide sequence ID" value="NC_010793.1"/>
</dbReference>
<dbReference type="SMR" id="B3CTQ6"/>
<dbReference type="GeneID" id="89458878"/>
<dbReference type="KEGG" id="ott:OTT_1295"/>
<dbReference type="HOGENOM" id="CLU_101379_2_0_5"/>
<dbReference type="OrthoDB" id="9808774at2"/>
<dbReference type="Proteomes" id="UP000001033">
    <property type="component" value="Chromosome"/>
</dbReference>
<dbReference type="GO" id="GO:0003677">
    <property type="term" value="F:DNA binding"/>
    <property type="evidence" value="ECO:0007669"/>
    <property type="project" value="UniProtKB-UniRule"/>
</dbReference>
<dbReference type="GO" id="GO:0070063">
    <property type="term" value="F:RNA polymerase binding"/>
    <property type="evidence" value="ECO:0007669"/>
    <property type="project" value="InterPro"/>
</dbReference>
<dbReference type="GO" id="GO:0006354">
    <property type="term" value="P:DNA-templated transcription elongation"/>
    <property type="evidence" value="ECO:0007669"/>
    <property type="project" value="TreeGrafter"/>
</dbReference>
<dbReference type="GO" id="GO:0032784">
    <property type="term" value="P:regulation of DNA-templated transcription elongation"/>
    <property type="evidence" value="ECO:0007669"/>
    <property type="project" value="UniProtKB-UniRule"/>
</dbReference>
<dbReference type="FunFam" id="1.10.287.180:FF:000001">
    <property type="entry name" value="Transcription elongation factor GreA"/>
    <property type="match status" value="1"/>
</dbReference>
<dbReference type="FunFam" id="3.10.50.30:FF:000001">
    <property type="entry name" value="Transcription elongation factor GreA"/>
    <property type="match status" value="1"/>
</dbReference>
<dbReference type="Gene3D" id="3.10.50.30">
    <property type="entry name" value="Transcription elongation factor, GreA/GreB, C-terminal domain"/>
    <property type="match status" value="1"/>
</dbReference>
<dbReference type="Gene3D" id="1.10.287.180">
    <property type="entry name" value="Transcription elongation factor, GreA/GreB, N-terminal domain"/>
    <property type="match status" value="1"/>
</dbReference>
<dbReference type="HAMAP" id="MF_00105">
    <property type="entry name" value="GreA_GreB"/>
    <property type="match status" value="1"/>
</dbReference>
<dbReference type="InterPro" id="IPR036953">
    <property type="entry name" value="GreA/GreB_C_sf"/>
</dbReference>
<dbReference type="InterPro" id="IPR018151">
    <property type="entry name" value="TF_GreA/GreB_CS"/>
</dbReference>
<dbReference type="InterPro" id="IPR006359">
    <property type="entry name" value="Tscrpt_elong_fac_GreA"/>
</dbReference>
<dbReference type="InterPro" id="IPR028624">
    <property type="entry name" value="Tscrpt_elong_fac_GreA/B"/>
</dbReference>
<dbReference type="InterPro" id="IPR001437">
    <property type="entry name" value="Tscrpt_elong_fac_GreA/B_C"/>
</dbReference>
<dbReference type="InterPro" id="IPR023459">
    <property type="entry name" value="Tscrpt_elong_fac_GreA/B_fam"/>
</dbReference>
<dbReference type="InterPro" id="IPR022691">
    <property type="entry name" value="Tscrpt_elong_fac_GreA/B_N"/>
</dbReference>
<dbReference type="InterPro" id="IPR036805">
    <property type="entry name" value="Tscrpt_elong_fac_GreA/B_N_sf"/>
</dbReference>
<dbReference type="NCBIfam" id="TIGR01462">
    <property type="entry name" value="greA"/>
    <property type="match status" value="1"/>
</dbReference>
<dbReference type="NCBIfam" id="NF001261">
    <property type="entry name" value="PRK00226.1-2"/>
    <property type="match status" value="1"/>
</dbReference>
<dbReference type="NCBIfam" id="NF001263">
    <property type="entry name" value="PRK00226.1-4"/>
    <property type="match status" value="1"/>
</dbReference>
<dbReference type="NCBIfam" id="NF001264">
    <property type="entry name" value="PRK00226.1-5"/>
    <property type="match status" value="1"/>
</dbReference>
<dbReference type="PANTHER" id="PTHR30437">
    <property type="entry name" value="TRANSCRIPTION ELONGATION FACTOR GREA"/>
    <property type="match status" value="1"/>
</dbReference>
<dbReference type="PANTHER" id="PTHR30437:SF4">
    <property type="entry name" value="TRANSCRIPTION ELONGATION FACTOR GREA"/>
    <property type="match status" value="1"/>
</dbReference>
<dbReference type="Pfam" id="PF01272">
    <property type="entry name" value="GreA_GreB"/>
    <property type="match status" value="1"/>
</dbReference>
<dbReference type="Pfam" id="PF03449">
    <property type="entry name" value="GreA_GreB_N"/>
    <property type="match status" value="1"/>
</dbReference>
<dbReference type="PIRSF" id="PIRSF006092">
    <property type="entry name" value="GreA_GreB"/>
    <property type="match status" value="1"/>
</dbReference>
<dbReference type="SUPFAM" id="SSF54534">
    <property type="entry name" value="FKBP-like"/>
    <property type="match status" value="1"/>
</dbReference>
<dbReference type="SUPFAM" id="SSF46557">
    <property type="entry name" value="GreA transcript cleavage protein, N-terminal domain"/>
    <property type="match status" value="1"/>
</dbReference>
<dbReference type="PROSITE" id="PS00829">
    <property type="entry name" value="GREAB_1"/>
    <property type="match status" value="1"/>
</dbReference>
<dbReference type="PROSITE" id="PS00830">
    <property type="entry name" value="GREAB_2"/>
    <property type="match status" value="1"/>
</dbReference>
<organism>
    <name type="scientific">Orientia tsutsugamushi (strain Ikeda)</name>
    <name type="common">Rickettsia tsutsugamushi</name>
    <dbReference type="NCBI Taxonomy" id="334380"/>
    <lineage>
        <taxon>Bacteria</taxon>
        <taxon>Pseudomonadati</taxon>
        <taxon>Pseudomonadota</taxon>
        <taxon>Alphaproteobacteria</taxon>
        <taxon>Rickettsiales</taxon>
        <taxon>Rickettsiaceae</taxon>
        <taxon>Rickettsieae</taxon>
        <taxon>Orientia</taxon>
    </lineage>
</organism>
<sequence>MARFPITIKGFHKLEQELKHLKYVERLKITTDISTAREFGDLSENAEYKAAKERQLLNDKKIYDLENKLANAEVIEITKINSNSVKFGARVVLLDRDTEKEVVYQIVGEYEADITQNLISIASPIAQALIGKKAGDIIEVITPKGGRFYELLKVQYVDF</sequence>
<proteinExistence type="inferred from homology"/>
<accession>B3CTQ6</accession>
<protein>
    <recommendedName>
        <fullName evidence="1">Transcription elongation factor GreA</fullName>
    </recommendedName>
    <alternativeName>
        <fullName evidence="1">Transcript cleavage factor GreA</fullName>
    </alternativeName>
</protein>
<reference key="1">
    <citation type="journal article" date="2008" name="DNA Res.">
        <title>The whole-genome sequencing of the obligate intracellular bacterium Orientia tsutsugamushi revealed massive gene amplification during reductive genome evolution.</title>
        <authorList>
            <person name="Nakayama K."/>
            <person name="Yamashita A."/>
            <person name="Kurokawa K."/>
            <person name="Morimoto T."/>
            <person name="Ogawa M."/>
            <person name="Fukuhara M."/>
            <person name="Urakami H."/>
            <person name="Ohnishi M."/>
            <person name="Uchiyama I."/>
            <person name="Ogura Y."/>
            <person name="Ooka T."/>
            <person name="Oshima K."/>
            <person name="Tamura A."/>
            <person name="Hattori M."/>
            <person name="Hayashi T."/>
        </authorList>
    </citation>
    <scope>NUCLEOTIDE SEQUENCE [LARGE SCALE GENOMIC DNA]</scope>
    <source>
        <strain>Ikeda</strain>
    </source>
</reference>
<keyword id="KW-0238">DNA-binding</keyword>
<keyword id="KW-0804">Transcription</keyword>
<keyword id="KW-0805">Transcription regulation</keyword>